<dbReference type="EMBL" id="AK299754">
    <property type="protein sequence ID" value="BAG61643.1"/>
    <property type="molecule type" value="mRNA"/>
</dbReference>
<dbReference type="EMBL" id="AL132795">
    <property type="status" value="NOT_ANNOTATED_CDS"/>
    <property type="molecule type" value="Genomic_DNA"/>
</dbReference>
<dbReference type="EMBL" id="BC106949">
    <property type="protein sequence ID" value="AAI06950.1"/>
    <property type="molecule type" value="mRNA"/>
</dbReference>
<dbReference type="CCDS" id="CCDS34521.1">
    <molecule id="Q5TD94-1"/>
</dbReference>
<dbReference type="CCDS" id="CCDS55051.1">
    <molecule id="Q5TD94-3"/>
</dbReference>
<dbReference type="RefSeq" id="NP_001010892.1">
    <molecule id="Q5TD94-1"/>
    <property type="nucleotide sequence ID" value="NM_001010892.3"/>
</dbReference>
<dbReference type="RefSeq" id="NP_001155136.1">
    <molecule id="Q5TD94-3"/>
    <property type="nucleotide sequence ID" value="NM_001161664.2"/>
</dbReference>
<dbReference type="RefSeq" id="XP_016866315.1">
    <property type="nucleotide sequence ID" value="XM_017010826.1"/>
</dbReference>
<dbReference type="RefSeq" id="XP_054211300.1">
    <molecule id="Q5TD94-3"/>
    <property type="nucleotide sequence ID" value="XM_054355325.1"/>
</dbReference>
<dbReference type="PDB" id="8J07">
    <property type="method" value="EM"/>
    <property type="resolution" value="4.10 A"/>
    <property type="chains" value="G/H/I/J/g/h/i/j=1-716"/>
</dbReference>
<dbReference type="PDBsum" id="8J07"/>
<dbReference type="EMDB" id="EMD-35888"/>
<dbReference type="SMR" id="Q5TD94"/>
<dbReference type="BioGRID" id="131368">
    <property type="interactions" value="3"/>
</dbReference>
<dbReference type="ComplexPortal" id="CPX-8163">
    <property type="entry name" value="Radial spoke complex, ciliiar variant"/>
</dbReference>
<dbReference type="FunCoup" id="Q5TD94">
    <property type="interactions" value="82"/>
</dbReference>
<dbReference type="IntAct" id="Q5TD94">
    <property type="interactions" value="3"/>
</dbReference>
<dbReference type="STRING" id="9606.ENSP00000229554"/>
<dbReference type="iPTMnet" id="Q5TD94"/>
<dbReference type="PhosphoSitePlus" id="Q5TD94"/>
<dbReference type="BioMuta" id="RSPH4A"/>
<dbReference type="DMDM" id="74746178"/>
<dbReference type="MassIVE" id="Q5TD94"/>
<dbReference type="PaxDb" id="9606-ENSP00000229554"/>
<dbReference type="PeptideAtlas" id="Q5TD94"/>
<dbReference type="ProteomicsDB" id="65005">
    <molecule id="Q5TD94-1"/>
</dbReference>
<dbReference type="ProteomicsDB" id="65006">
    <molecule id="Q5TD94-2"/>
</dbReference>
<dbReference type="ProteomicsDB" id="65007">
    <molecule id="Q5TD94-3"/>
</dbReference>
<dbReference type="Antibodypedia" id="32513">
    <property type="antibodies" value="47 antibodies from 11 providers"/>
</dbReference>
<dbReference type="DNASU" id="345895"/>
<dbReference type="Ensembl" id="ENST00000229554.10">
    <molecule id="Q5TD94-1"/>
    <property type="protein sequence ID" value="ENSP00000229554.5"/>
    <property type="gene ID" value="ENSG00000111834.13"/>
</dbReference>
<dbReference type="Ensembl" id="ENST00000368580.4">
    <molecule id="Q5TD94-2"/>
    <property type="protein sequence ID" value="ENSP00000357569.4"/>
    <property type="gene ID" value="ENSG00000111834.13"/>
</dbReference>
<dbReference type="Ensembl" id="ENST00000368581.8">
    <molecule id="Q5TD94-3"/>
    <property type="protein sequence ID" value="ENSP00000357570.4"/>
    <property type="gene ID" value="ENSG00000111834.13"/>
</dbReference>
<dbReference type="GeneID" id="345895"/>
<dbReference type="KEGG" id="hsa:345895"/>
<dbReference type="MANE-Select" id="ENST00000229554.10">
    <property type="protein sequence ID" value="ENSP00000229554.5"/>
    <property type="RefSeq nucleotide sequence ID" value="NM_001010892.3"/>
    <property type="RefSeq protein sequence ID" value="NP_001010892.1"/>
</dbReference>
<dbReference type="UCSC" id="uc003pxe.3">
    <molecule id="Q5TD94-1"/>
    <property type="organism name" value="human"/>
</dbReference>
<dbReference type="AGR" id="HGNC:21558"/>
<dbReference type="CTD" id="345895"/>
<dbReference type="DisGeNET" id="345895"/>
<dbReference type="GeneCards" id="RSPH4A"/>
<dbReference type="GeneReviews" id="RSPH4A"/>
<dbReference type="HGNC" id="HGNC:21558">
    <property type="gene designation" value="RSPH4A"/>
</dbReference>
<dbReference type="HPA" id="ENSG00000111834">
    <property type="expression patterns" value="Group enriched (choroid plexus, fallopian tube)"/>
</dbReference>
<dbReference type="MalaCards" id="RSPH4A"/>
<dbReference type="MIM" id="612647">
    <property type="type" value="gene"/>
</dbReference>
<dbReference type="MIM" id="612649">
    <property type="type" value="phenotype"/>
</dbReference>
<dbReference type="neXtProt" id="NX_Q5TD94"/>
<dbReference type="OpenTargets" id="ENSG00000111834"/>
<dbReference type="Orphanet" id="244">
    <property type="disease" value="Primary ciliary dyskinesia"/>
</dbReference>
<dbReference type="PharmGKB" id="PA164725568"/>
<dbReference type="VEuPathDB" id="HostDB:ENSG00000111834"/>
<dbReference type="eggNOG" id="ENOG502QSU4">
    <property type="taxonomic scope" value="Eukaryota"/>
</dbReference>
<dbReference type="GeneTree" id="ENSGT00500000044869"/>
<dbReference type="HOGENOM" id="CLU_021526_1_0_1"/>
<dbReference type="InParanoid" id="Q5TD94"/>
<dbReference type="OMA" id="TYFVCND"/>
<dbReference type="OrthoDB" id="272202at2759"/>
<dbReference type="PAN-GO" id="Q5TD94">
    <property type="GO annotations" value="3 GO annotations based on evolutionary models"/>
</dbReference>
<dbReference type="PhylomeDB" id="Q5TD94"/>
<dbReference type="TreeFam" id="TF324531"/>
<dbReference type="PathwayCommons" id="Q5TD94"/>
<dbReference type="BioGRID-ORCS" id="345895">
    <property type="hits" value="22 hits in 1164 CRISPR screens"/>
</dbReference>
<dbReference type="GeneWiki" id="RSPH4A"/>
<dbReference type="GenomeRNAi" id="345895"/>
<dbReference type="Pharos" id="Q5TD94">
    <property type="development level" value="Tbio"/>
</dbReference>
<dbReference type="PRO" id="PR:Q5TD94"/>
<dbReference type="Proteomes" id="UP000005640">
    <property type="component" value="Chromosome 6"/>
</dbReference>
<dbReference type="RNAct" id="Q5TD94">
    <property type="molecule type" value="protein"/>
</dbReference>
<dbReference type="Bgee" id="ENSG00000111834">
    <property type="expression patterns" value="Expressed in right uterine tube and 104 other cell types or tissues"/>
</dbReference>
<dbReference type="GO" id="GO:0097729">
    <property type="term" value="C:9+2 motile cilium"/>
    <property type="evidence" value="ECO:0000250"/>
    <property type="project" value="UniProtKB"/>
</dbReference>
<dbReference type="GO" id="GO:0005930">
    <property type="term" value="C:axoneme"/>
    <property type="evidence" value="ECO:0000314"/>
    <property type="project" value="SYSCILIA_CCNET"/>
</dbReference>
<dbReference type="GO" id="GO:0005576">
    <property type="term" value="C:extracellular region"/>
    <property type="evidence" value="ECO:0007669"/>
    <property type="project" value="GOC"/>
</dbReference>
<dbReference type="GO" id="GO:0031514">
    <property type="term" value="C:motile cilium"/>
    <property type="evidence" value="ECO:0000305"/>
    <property type="project" value="BHF-UCL"/>
</dbReference>
<dbReference type="GO" id="GO:0001534">
    <property type="term" value="C:radial spoke"/>
    <property type="evidence" value="ECO:0000250"/>
    <property type="project" value="UniProtKB"/>
</dbReference>
<dbReference type="GO" id="GO:0001535">
    <property type="term" value="C:radial spoke head"/>
    <property type="evidence" value="ECO:0000250"/>
    <property type="project" value="UniProtKB"/>
</dbReference>
<dbReference type="GO" id="GO:0120336">
    <property type="term" value="C:radial spoke head 1"/>
    <property type="evidence" value="ECO:0007669"/>
    <property type="project" value="Ensembl"/>
</dbReference>
<dbReference type="GO" id="GO:0120337">
    <property type="term" value="C:radial spoke head 2"/>
    <property type="evidence" value="ECO:0007669"/>
    <property type="project" value="Ensembl"/>
</dbReference>
<dbReference type="GO" id="GO:0120338">
    <property type="term" value="C:radial spoke head 3"/>
    <property type="evidence" value="ECO:0007669"/>
    <property type="project" value="Ensembl"/>
</dbReference>
<dbReference type="GO" id="GO:0035082">
    <property type="term" value="P:axoneme assembly"/>
    <property type="evidence" value="ECO:0000315"/>
    <property type="project" value="BHF-UCL"/>
</dbReference>
<dbReference type="GO" id="GO:0003341">
    <property type="term" value="P:cilium movement"/>
    <property type="evidence" value="ECO:0000315"/>
    <property type="project" value="BHF-UCL"/>
</dbReference>
<dbReference type="GO" id="GO:0060294">
    <property type="term" value="P:cilium movement involved in cell motility"/>
    <property type="evidence" value="ECO:0007669"/>
    <property type="project" value="InterPro"/>
</dbReference>
<dbReference type="GO" id="GO:0003351">
    <property type="term" value="P:epithelial cilium movement involved in extracellular fluid movement"/>
    <property type="evidence" value="ECO:0007669"/>
    <property type="project" value="Ensembl"/>
</dbReference>
<dbReference type="GO" id="GO:0051649">
    <property type="term" value="P:establishment of localization in cell"/>
    <property type="evidence" value="ECO:0007669"/>
    <property type="project" value="Ensembl"/>
</dbReference>
<dbReference type="GO" id="GO:0120221">
    <property type="term" value="P:maintenance of ciliary planar beating movement pattern"/>
    <property type="evidence" value="ECO:0007669"/>
    <property type="project" value="Ensembl"/>
</dbReference>
<dbReference type="GO" id="GO:0062177">
    <property type="term" value="P:radial spoke assembly"/>
    <property type="evidence" value="ECO:0000250"/>
    <property type="project" value="UniProtKB"/>
</dbReference>
<dbReference type="CDD" id="cd22963">
    <property type="entry name" value="DD_CrRSP4-like"/>
    <property type="match status" value="1"/>
</dbReference>
<dbReference type="InterPro" id="IPR006802">
    <property type="entry name" value="Radial_spoke"/>
</dbReference>
<dbReference type="PANTHER" id="PTHR13159:SF4">
    <property type="entry name" value="RADIAL SPOKE HEAD PROTEIN 4 HOMOLOG A"/>
    <property type="match status" value="1"/>
</dbReference>
<dbReference type="PANTHER" id="PTHR13159">
    <property type="entry name" value="RADIAL SPOKEHEAD-RELATED"/>
    <property type="match status" value="1"/>
</dbReference>
<dbReference type="Pfam" id="PF04712">
    <property type="entry name" value="Radial_spoke"/>
    <property type="match status" value="1"/>
</dbReference>
<organism>
    <name type="scientific">Homo sapiens</name>
    <name type="common">Human</name>
    <dbReference type="NCBI Taxonomy" id="9606"/>
    <lineage>
        <taxon>Eukaryota</taxon>
        <taxon>Metazoa</taxon>
        <taxon>Chordata</taxon>
        <taxon>Craniata</taxon>
        <taxon>Vertebrata</taxon>
        <taxon>Euteleostomi</taxon>
        <taxon>Mammalia</taxon>
        <taxon>Eutheria</taxon>
        <taxon>Euarchontoglires</taxon>
        <taxon>Primates</taxon>
        <taxon>Haplorrhini</taxon>
        <taxon>Catarrhini</taxon>
        <taxon>Hominidae</taxon>
        <taxon>Homo</taxon>
    </lineage>
</organism>
<comment type="function">
    <text evidence="1 4">Component of the axonemal radial spoke head which plays an important role in ciliary motility (PubMed:19200523). Essential for triplet radial spokes (RS1, RS2 and RS3) head assembly in the motile cilia (By similarity).</text>
</comment>
<comment type="subunit">
    <text evidence="1">Interacts with RSPH6A.</text>
</comment>
<comment type="subcellular location">
    <subcellularLocation>
        <location evidence="9">Cytoplasm</location>
        <location evidence="9">Cytoskeleton</location>
        <location evidence="9">Cilium axoneme</location>
    </subcellularLocation>
    <subcellularLocation>
        <location evidence="4">Cell projection</location>
        <location evidence="4">Cilium</location>
    </subcellularLocation>
</comment>
<comment type="alternative products">
    <event type="alternative splicing"/>
    <isoform>
        <id>Q5TD94-1</id>
        <name>1</name>
        <sequence type="displayed"/>
    </isoform>
    <isoform>
        <id>Q5TD94-2</id>
        <name>2</name>
        <sequence type="described" ref="VSP_030125"/>
    </isoform>
    <isoform>
        <id>Q5TD94-3</id>
        <name>3</name>
        <sequence type="described" ref="VSP_030126 VSP_030127"/>
    </isoform>
</comment>
<comment type="tissue specificity">
    <text evidence="4 6">Expressed in trachea, lungs, and testes (PubMed:23993197). Very strong expression is detected in nasal brushings (PubMed:19200523).</text>
</comment>
<comment type="disease" evidence="4 5 7">
    <disease id="DI-02199">
        <name>Ciliary dyskinesia, primary, 11</name>
        <acronym>CILD11</acronym>
        <description>A disorder characterized by abnormalities of motile cilia. Respiratory infections leading to chronic inflammation and bronchiectasis are recurrent, due to defects in the respiratory cilia; reduced fertility is often observed in male patients due to abnormalities of sperm tails. Half of the patients exhibit situs inversus, due to dysfunction of monocilia at the embryonic node and randomization of left-right body asymmetry. Primary ciliary dyskinesia associated with situs inversus is referred to as Kartagener syndrome.</description>
        <dbReference type="MIM" id="612649"/>
    </disease>
    <text>The disease is caused by variants affecting the gene represented in this entry.</text>
</comment>
<comment type="similarity">
    <text evidence="9">Belongs to the flagellar radial spoke RSP4/6 family.</text>
</comment>
<keyword id="KW-0002">3D-structure</keyword>
<keyword id="KW-0025">Alternative splicing</keyword>
<keyword id="KW-0966">Cell projection</keyword>
<keyword id="KW-1186">Ciliopathy</keyword>
<keyword id="KW-0969">Cilium</keyword>
<keyword id="KW-0970">Cilium biogenesis/degradation</keyword>
<keyword id="KW-0963">Cytoplasm</keyword>
<keyword id="KW-0206">Cytoskeleton</keyword>
<keyword id="KW-0225">Disease variant</keyword>
<keyword id="KW-1012">Kartagener syndrome</keyword>
<keyword id="KW-0597">Phosphoprotein</keyword>
<keyword id="KW-0990">Primary ciliary dyskinesia</keyword>
<keyword id="KW-1267">Proteomics identification</keyword>
<keyword id="KW-1185">Reference proteome</keyword>
<gene>
    <name type="primary">RSPH4A</name>
    <name type="synonym">RSHL3</name>
</gene>
<protein>
    <recommendedName>
        <fullName>Radial spoke head protein 4 homolog A</fullName>
    </recommendedName>
    <alternativeName>
        <fullName>Radial spoke head-like protein 3</fullName>
    </alternativeName>
</protein>
<feature type="chain" id="PRO_0000313738" description="Radial spoke head protein 4 homolog A">
    <location>
        <begin position="1"/>
        <end position="716"/>
    </location>
</feature>
<feature type="region of interest" description="Disordered" evidence="2">
    <location>
        <begin position="1"/>
        <end position="164"/>
    </location>
</feature>
<feature type="region of interest" description="Disordered" evidence="2">
    <location>
        <begin position="375"/>
        <end position="410"/>
    </location>
</feature>
<feature type="region of interest" description="Disordered" evidence="2">
    <location>
        <begin position="506"/>
        <end position="526"/>
    </location>
</feature>
<feature type="region of interest" description="Disordered" evidence="2">
    <location>
        <begin position="697"/>
        <end position="716"/>
    </location>
</feature>
<feature type="compositionally biased region" description="Basic and acidic residues" evidence="2">
    <location>
        <begin position="8"/>
        <end position="25"/>
    </location>
</feature>
<feature type="compositionally biased region" description="Low complexity" evidence="2">
    <location>
        <begin position="29"/>
        <end position="42"/>
    </location>
</feature>
<feature type="compositionally biased region" description="Low complexity" evidence="2">
    <location>
        <begin position="54"/>
        <end position="66"/>
    </location>
</feature>
<feature type="compositionally biased region" description="Low complexity" evidence="2">
    <location>
        <begin position="80"/>
        <end position="100"/>
    </location>
</feature>
<feature type="compositionally biased region" description="Polar residues" evidence="2">
    <location>
        <begin position="140"/>
        <end position="156"/>
    </location>
</feature>
<feature type="compositionally biased region" description="Acidic residues" evidence="2">
    <location>
        <begin position="375"/>
        <end position="389"/>
    </location>
</feature>
<feature type="compositionally biased region" description="Acidic residues" evidence="2">
    <location>
        <begin position="506"/>
        <end position="516"/>
    </location>
</feature>
<feature type="compositionally biased region" description="Acidic residues" evidence="2">
    <location>
        <begin position="701"/>
        <end position="716"/>
    </location>
</feature>
<feature type="modified residue" description="Phosphoserine" evidence="1">
    <location>
        <position position="396"/>
    </location>
</feature>
<feature type="splice variant" id="VSP_030125" description="In isoform 2." evidence="9">
    <location>
        <begin position="308"/>
        <end position="554"/>
    </location>
</feature>
<feature type="splice variant" id="VSP_030126" description="In isoform 3." evidence="8">
    <original>GRCNWFNSIQKNEEEEEEEDEEKDDSDYIEQEVGLPLLTPISEDLE</original>
    <variation>RFRIYPPGQHGYPQISFHNMLLQSFNPTFGLEHMPSPMAKSLKIST</variation>
    <location>
        <begin position="555"/>
        <end position="600"/>
    </location>
</feature>
<feature type="splice variant" id="VSP_030127" description="In isoform 3." evidence="8">
    <location>
        <begin position="601"/>
        <end position="716"/>
    </location>
</feature>
<feature type="sequence variant" id="VAR_055235" description="In CILD11; dbSNP:rs767490154." evidence="4">
    <original>P</original>
    <variation>S</variation>
    <location>
        <position position="87"/>
    </location>
</feature>
<feature type="sequence variant" id="VAR_037715" description="In dbSNP:rs13213314.">
    <original>T</original>
    <variation>S</variation>
    <location>
        <position position="149"/>
    </location>
</feature>
<feature type="sequence variant" id="VAR_070565" description="In CILD11; uncertain significance; dbSNP:rs753041231.">
    <original>G</original>
    <variation>E</variation>
    <location>
        <position position="464"/>
    </location>
</feature>
<feature type="sequence variant" id="VAR_037716" description="In dbSNP:rs6927567.">
    <original>R</original>
    <variation>H</variation>
    <location>
        <position position="556"/>
    </location>
</feature>
<feature type="sequence variant" id="VAR_037717" description="In dbSNP:rs784133." evidence="3">
    <original>L</original>
    <variation>P</variation>
    <location>
        <position position="589"/>
    </location>
</feature>
<feature type="sequence variant" id="VAR_037718" description="In dbSNP:rs9488991.">
    <original>N</original>
    <variation>H</variation>
    <location>
        <position position="627"/>
    </location>
</feature>
<feature type="sequence variant" id="VAR_037719" description="In dbSNP:rs9488992.">
    <original>A</original>
    <variation>V</variation>
    <location>
        <position position="700"/>
    </location>
</feature>
<proteinExistence type="evidence at protein level"/>
<sequence>MEDSTSPKQEKENQEELGETRRPWEGKTAASPQYSEPESSEPLEAKQGPETGRQSRSSRPWSPQSRAKTPLGGPAGPETSSPAPVSPREPSSSPSPLAPARQDLAAPPQSDRTTSVIPEAGTPYPDPLEQSSDKRESTPHHTSQSEGNTFQQSQQPKPHLCGRRDVSYNNAKQKELRFDVFQEEDSNSDYDLQQPAPGGSEVAPSMLEITIQNAKAYLLKTSSNSGFNLYDHLSNMLTKILNERPENAVDIFENISQDVKMAHFSKKFDALQNENELLPTYEIAEKQKALFLQGHLEGVDQELEDEIAENALPNVMESAFYFEQAGVGLGTDETYRIFLALKQLTDTHPIQRCRFWGKILGLEMNYIVAEVEFREGEDEEEVEEEDVAEERDNGESEAHEDEEDELPKSFYKAPQAIPKEESRTGANKYVYFVCNEPGRPWVKLPPVIPAQIVIARKIKKFFTGRLDAPIISYPPFPGNESNYLRAQIARISAGTHVSPLGFYQFGEEEGEEEEEAEGGRNSFEENPDFEGIQVIDLVESLSNWVHHVQHILSQGRCNWFNSIQKNEEEEEEEDEEKDDSDYIEQEVGLPLLTPISEDLEIQNIPPWTTRLSSNLIPQYAIAVLQSNLWPGAYAFSNGKKFENFYIGWGHKYSPDNYTPPVPPPVYQEYPSGPEITEMDDPSVEEEQAFRAAQEAVLLAAENEESEEDEDEEDDYD</sequence>
<name>RSH4A_HUMAN</name>
<accession>Q5TD94</accession>
<accession>B4DSI1</accession>
<accession>Q3KP24</accession>
<accession>Q5TD95</accession>
<evidence type="ECO:0000250" key="1">
    <source>
        <dbReference type="UniProtKB" id="Q8BYM7"/>
    </source>
</evidence>
<evidence type="ECO:0000256" key="2">
    <source>
        <dbReference type="SAM" id="MobiDB-lite"/>
    </source>
</evidence>
<evidence type="ECO:0000269" key="3">
    <source>
    </source>
</evidence>
<evidence type="ECO:0000269" key="4">
    <source>
    </source>
</evidence>
<evidence type="ECO:0000269" key="5">
    <source>
    </source>
</evidence>
<evidence type="ECO:0000269" key="6">
    <source>
    </source>
</evidence>
<evidence type="ECO:0000269" key="7">
    <source>
    </source>
</evidence>
<evidence type="ECO:0000303" key="8">
    <source>
    </source>
</evidence>
<evidence type="ECO:0000305" key="9"/>
<reference key="1">
    <citation type="journal article" date="2004" name="Nat. Genet.">
        <title>Complete sequencing and characterization of 21,243 full-length human cDNAs.</title>
        <authorList>
            <person name="Ota T."/>
            <person name="Suzuki Y."/>
            <person name="Nishikawa T."/>
            <person name="Otsuki T."/>
            <person name="Sugiyama T."/>
            <person name="Irie R."/>
            <person name="Wakamatsu A."/>
            <person name="Hayashi K."/>
            <person name="Sato H."/>
            <person name="Nagai K."/>
            <person name="Kimura K."/>
            <person name="Makita H."/>
            <person name="Sekine M."/>
            <person name="Obayashi M."/>
            <person name="Nishi T."/>
            <person name="Shibahara T."/>
            <person name="Tanaka T."/>
            <person name="Ishii S."/>
            <person name="Yamamoto J."/>
            <person name="Saito K."/>
            <person name="Kawai Y."/>
            <person name="Isono Y."/>
            <person name="Nakamura Y."/>
            <person name="Nagahari K."/>
            <person name="Murakami K."/>
            <person name="Yasuda T."/>
            <person name="Iwayanagi T."/>
            <person name="Wagatsuma M."/>
            <person name="Shiratori A."/>
            <person name="Sudo H."/>
            <person name="Hosoiri T."/>
            <person name="Kaku Y."/>
            <person name="Kodaira H."/>
            <person name="Kondo H."/>
            <person name="Sugawara M."/>
            <person name="Takahashi M."/>
            <person name="Kanda K."/>
            <person name="Yokoi T."/>
            <person name="Furuya T."/>
            <person name="Kikkawa E."/>
            <person name="Omura Y."/>
            <person name="Abe K."/>
            <person name="Kamihara K."/>
            <person name="Katsuta N."/>
            <person name="Sato K."/>
            <person name="Tanikawa M."/>
            <person name="Yamazaki M."/>
            <person name="Ninomiya K."/>
            <person name="Ishibashi T."/>
            <person name="Yamashita H."/>
            <person name="Murakawa K."/>
            <person name="Fujimori K."/>
            <person name="Tanai H."/>
            <person name="Kimata M."/>
            <person name="Watanabe M."/>
            <person name="Hiraoka S."/>
            <person name="Chiba Y."/>
            <person name="Ishida S."/>
            <person name="Ono Y."/>
            <person name="Takiguchi S."/>
            <person name="Watanabe S."/>
            <person name="Yosida M."/>
            <person name="Hotuta T."/>
            <person name="Kusano J."/>
            <person name="Kanehori K."/>
            <person name="Takahashi-Fujii A."/>
            <person name="Hara H."/>
            <person name="Tanase T.-O."/>
            <person name="Nomura Y."/>
            <person name="Togiya S."/>
            <person name="Komai F."/>
            <person name="Hara R."/>
            <person name="Takeuchi K."/>
            <person name="Arita M."/>
            <person name="Imose N."/>
            <person name="Musashino K."/>
            <person name="Yuuki H."/>
            <person name="Oshima A."/>
            <person name="Sasaki N."/>
            <person name="Aotsuka S."/>
            <person name="Yoshikawa Y."/>
            <person name="Matsunawa H."/>
            <person name="Ichihara T."/>
            <person name="Shiohata N."/>
            <person name="Sano S."/>
            <person name="Moriya S."/>
            <person name="Momiyama H."/>
            <person name="Satoh N."/>
            <person name="Takami S."/>
            <person name="Terashima Y."/>
            <person name="Suzuki O."/>
            <person name="Nakagawa S."/>
            <person name="Senoh A."/>
            <person name="Mizoguchi H."/>
            <person name="Goto Y."/>
            <person name="Shimizu F."/>
            <person name="Wakebe H."/>
            <person name="Hishigaki H."/>
            <person name="Watanabe T."/>
            <person name="Sugiyama A."/>
            <person name="Takemoto M."/>
            <person name="Kawakami B."/>
            <person name="Yamazaki M."/>
            <person name="Watanabe K."/>
            <person name="Kumagai A."/>
            <person name="Itakura S."/>
            <person name="Fukuzumi Y."/>
            <person name="Fujimori Y."/>
            <person name="Komiyama M."/>
            <person name="Tashiro H."/>
            <person name="Tanigami A."/>
            <person name="Fujiwara T."/>
            <person name="Ono T."/>
            <person name="Yamada K."/>
            <person name="Fujii Y."/>
            <person name="Ozaki K."/>
            <person name="Hirao M."/>
            <person name="Ohmori Y."/>
            <person name="Kawabata A."/>
            <person name="Hikiji T."/>
            <person name="Kobatake N."/>
            <person name="Inagaki H."/>
            <person name="Ikema Y."/>
            <person name="Okamoto S."/>
            <person name="Okitani R."/>
            <person name="Kawakami T."/>
            <person name="Noguchi S."/>
            <person name="Itoh T."/>
            <person name="Shigeta K."/>
            <person name="Senba T."/>
            <person name="Matsumura K."/>
            <person name="Nakajima Y."/>
            <person name="Mizuno T."/>
            <person name="Morinaga M."/>
            <person name="Sasaki M."/>
            <person name="Togashi T."/>
            <person name="Oyama M."/>
            <person name="Hata H."/>
            <person name="Watanabe M."/>
            <person name="Komatsu T."/>
            <person name="Mizushima-Sugano J."/>
            <person name="Satoh T."/>
            <person name="Shirai Y."/>
            <person name="Takahashi Y."/>
            <person name="Nakagawa K."/>
            <person name="Okumura K."/>
            <person name="Nagase T."/>
            <person name="Nomura N."/>
            <person name="Kikuchi H."/>
            <person name="Masuho Y."/>
            <person name="Yamashita R."/>
            <person name="Nakai K."/>
            <person name="Yada T."/>
            <person name="Nakamura Y."/>
            <person name="Ohara O."/>
            <person name="Isogai T."/>
            <person name="Sugano S."/>
        </authorList>
    </citation>
    <scope>NUCLEOTIDE SEQUENCE [LARGE SCALE MRNA] (ISOFORM 1)</scope>
    <scope>VARIANT PRO-589</scope>
    <source>
        <tissue>Brain</tissue>
    </source>
</reference>
<reference key="2">
    <citation type="journal article" date="2003" name="Nature">
        <title>The DNA sequence and analysis of human chromosome 6.</title>
        <authorList>
            <person name="Mungall A.J."/>
            <person name="Palmer S.A."/>
            <person name="Sims S.K."/>
            <person name="Edwards C.A."/>
            <person name="Ashurst J.L."/>
            <person name="Wilming L."/>
            <person name="Jones M.C."/>
            <person name="Horton R."/>
            <person name="Hunt S.E."/>
            <person name="Scott C.E."/>
            <person name="Gilbert J.G.R."/>
            <person name="Clamp M.E."/>
            <person name="Bethel G."/>
            <person name="Milne S."/>
            <person name="Ainscough R."/>
            <person name="Almeida J.P."/>
            <person name="Ambrose K.D."/>
            <person name="Andrews T.D."/>
            <person name="Ashwell R.I.S."/>
            <person name="Babbage A.K."/>
            <person name="Bagguley C.L."/>
            <person name="Bailey J."/>
            <person name="Banerjee R."/>
            <person name="Barker D.J."/>
            <person name="Barlow K.F."/>
            <person name="Bates K."/>
            <person name="Beare D.M."/>
            <person name="Beasley H."/>
            <person name="Beasley O."/>
            <person name="Bird C.P."/>
            <person name="Blakey S.E."/>
            <person name="Bray-Allen S."/>
            <person name="Brook J."/>
            <person name="Brown A.J."/>
            <person name="Brown J.Y."/>
            <person name="Burford D.C."/>
            <person name="Burrill W."/>
            <person name="Burton J."/>
            <person name="Carder C."/>
            <person name="Carter N.P."/>
            <person name="Chapman J.C."/>
            <person name="Clark S.Y."/>
            <person name="Clark G."/>
            <person name="Clee C.M."/>
            <person name="Clegg S."/>
            <person name="Cobley V."/>
            <person name="Collier R.E."/>
            <person name="Collins J.E."/>
            <person name="Colman L.K."/>
            <person name="Corby N.R."/>
            <person name="Coville G.J."/>
            <person name="Culley K.M."/>
            <person name="Dhami P."/>
            <person name="Davies J."/>
            <person name="Dunn M."/>
            <person name="Earthrowl M.E."/>
            <person name="Ellington A.E."/>
            <person name="Evans K.A."/>
            <person name="Faulkner L."/>
            <person name="Francis M.D."/>
            <person name="Frankish A."/>
            <person name="Frankland J."/>
            <person name="French L."/>
            <person name="Garner P."/>
            <person name="Garnett J."/>
            <person name="Ghori M.J."/>
            <person name="Gilby L.M."/>
            <person name="Gillson C.J."/>
            <person name="Glithero R.J."/>
            <person name="Grafham D.V."/>
            <person name="Grant M."/>
            <person name="Gribble S."/>
            <person name="Griffiths C."/>
            <person name="Griffiths M.N.D."/>
            <person name="Hall R."/>
            <person name="Halls K.S."/>
            <person name="Hammond S."/>
            <person name="Harley J.L."/>
            <person name="Hart E.A."/>
            <person name="Heath P.D."/>
            <person name="Heathcott R."/>
            <person name="Holmes S.J."/>
            <person name="Howden P.J."/>
            <person name="Howe K.L."/>
            <person name="Howell G.R."/>
            <person name="Huckle E."/>
            <person name="Humphray S.J."/>
            <person name="Humphries M.D."/>
            <person name="Hunt A.R."/>
            <person name="Johnson C.M."/>
            <person name="Joy A.A."/>
            <person name="Kay M."/>
            <person name="Keenan S.J."/>
            <person name="Kimberley A.M."/>
            <person name="King A."/>
            <person name="Laird G.K."/>
            <person name="Langford C."/>
            <person name="Lawlor S."/>
            <person name="Leongamornlert D.A."/>
            <person name="Leversha M."/>
            <person name="Lloyd C.R."/>
            <person name="Lloyd D.M."/>
            <person name="Loveland J.E."/>
            <person name="Lovell J."/>
            <person name="Martin S."/>
            <person name="Mashreghi-Mohammadi M."/>
            <person name="Maslen G.L."/>
            <person name="Matthews L."/>
            <person name="McCann O.T."/>
            <person name="McLaren S.J."/>
            <person name="McLay K."/>
            <person name="McMurray A."/>
            <person name="Moore M.J.F."/>
            <person name="Mullikin J.C."/>
            <person name="Niblett D."/>
            <person name="Nickerson T."/>
            <person name="Novik K.L."/>
            <person name="Oliver K."/>
            <person name="Overton-Larty E.K."/>
            <person name="Parker A."/>
            <person name="Patel R."/>
            <person name="Pearce A.V."/>
            <person name="Peck A.I."/>
            <person name="Phillimore B.J.C.T."/>
            <person name="Phillips S."/>
            <person name="Plumb R.W."/>
            <person name="Porter K.M."/>
            <person name="Ramsey Y."/>
            <person name="Ranby S.A."/>
            <person name="Rice C.M."/>
            <person name="Ross M.T."/>
            <person name="Searle S.M."/>
            <person name="Sehra H.K."/>
            <person name="Sheridan E."/>
            <person name="Skuce C.D."/>
            <person name="Smith S."/>
            <person name="Smith M."/>
            <person name="Spraggon L."/>
            <person name="Squares S.L."/>
            <person name="Steward C.A."/>
            <person name="Sycamore N."/>
            <person name="Tamlyn-Hall G."/>
            <person name="Tester J."/>
            <person name="Theaker A.J."/>
            <person name="Thomas D.W."/>
            <person name="Thorpe A."/>
            <person name="Tracey A."/>
            <person name="Tromans A."/>
            <person name="Tubby B."/>
            <person name="Wall M."/>
            <person name="Wallis J.M."/>
            <person name="West A.P."/>
            <person name="White S.S."/>
            <person name="Whitehead S.L."/>
            <person name="Whittaker H."/>
            <person name="Wild A."/>
            <person name="Willey D.J."/>
            <person name="Wilmer T.E."/>
            <person name="Wood J.M."/>
            <person name="Wray P.W."/>
            <person name="Wyatt J.C."/>
            <person name="Young L."/>
            <person name="Younger R.M."/>
            <person name="Bentley D.R."/>
            <person name="Coulson A."/>
            <person name="Durbin R.M."/>
            <person name="Hubbard T."/>
            <person name="Sulston J.E."/>
            <person name="Dunham I."/>
            <person name="Rogers J."/>
            <person name="Beck S."/>
        </authorList>
    </citation>
    <scope>NUCLEOTIDE SEQUENCE [LARGE SCALE GENOMIC DNA]</scope>
</reference>
<reference key="3">
    <citation type="journal article" date="2004" name="Genome Res.">
        <title>The status, quality, and expansion of the NIH full-length cDNA project: the Mammalian Gene Collection (MGC).</title>
        <authorList>
            <consortium name="The MGC Project Team"/>
        </authorList>
    </citation>
    <scope>NUCLEOTIDE SEQUENCE [LARGE SCALE MRNA] (ISOFORM 3)</scope>
</reference>
<reference key="4">
    <citation type="journal article" date="2009" name="Am. J. Hum. Genet.">
        <title>Mutations in radial spoke head protein genes RSPH9 and RSPH4A cause primary ciliary dyskinesia with central-microtubular-pair abnormalities.</title>
        <authorList>
            <person name="Castleman V.H."/>
            <person name="Romio L."/>
            <person name="Chodhari R."/>
            <person name="Hirst R.A."/>
            <person name="de Castro S.C.P."/>
            <person name="Parker K.A."/>
            <person name="Ybot-Gonzalez P."/>
            <person name="Emes R.D."/>
            <person name="Wilson S.W."/>
            <person name="Wallis C."/>
            <person name="Johnson C.A."/>
            <person name="Herrera R.J."/>
            <person name="Rutman A."/>
            <person name="Dixon M."/>
            <person name="Shoemark A."/>
            <person name="Bush A."/>
            <person name="Hogg C."/>
            <person name="Gardiner R.M."/>
            <person name="Reish O."/>
            <person name="Greene N.D.E."/>
            <person name="O'Callaghan C."/>
            <person name="Purton S."/>
            <person name="Chung E.M.K."/>
            <person name="Mitchison H.M."/>
        </authorList>
    </citation>
    <scope>IDENTIFICATION</scope>
    <scope>FUNCTION</scope>
    <scope>SUBCELLULAR LOCATION</scope>
    <scope>TISSUE SPECIFICITY</scope>
    <scope>VARIANT CILD11 SER-87</scope>
</reference>
<reference key="5">
    <citation type="journal article" date="2013" name="Hum. Mutat.">
        <title>Founder mutation in RSPH4A identified in patients of Hispanic descent with Primary Ciliary Dyskinesia.</title>
        <authorList>
            <person name="Daniels M.L."/>
            <person name="Leigh M.W."/>
            <person name="Davis S.D."/>
            <person name="Armstrong M.C."/>
            <person name="Carson J.L."/>
            <person name="Hazucha M."/>
            <person name="Dell S.D."/>
            <person name="Eriksson M."/>
            <person name="Collins F.S."/>
            <person name="Knowles M.R."/>
            <person name="Zariwala M.A."/>
        </authorList>
    </citation>
    <scope>INVOLVEMENT IN CILD11</scope>
</reference>
<reference key="6">
    <citation type="journal article" date="2013" name="Am. J. Hum. Genet.">
        <title>Loss-of-function mutations in RSPH1 cause primary ciliary dyskinesia with central-complex and radial-spoke defects.</title>
        <authorList>
            <person name="Kott E."/>
            <person name="Legendre M."/>
            <person name="Copin B."/>
            <person name="Papon J.F."/>
            <person name="Dastot-Le Moal F."/>
            <person name="Montantin G."/>
            <person name="Duquesnoy P."/>
            <person name="Piterboth W."/>
            <person name="Amram D."/>
            <person name="Bassinet L."/>
            <person name="Beucher J."/>
            <person name="Beydon N."/>
            <person name="Deneuville E."/>
            <person name="Houdouin V."/>
            <person name="Journel H."/>
            <person name="Just J."/>
            <person name="Nathan N."/>
            <person name="Tamalet A."/>
            <person name="Collot N."/>
            <person name="Jeanson L."/>
            <person name="Le Gouez M."/>
            <person name="Vallette B."/>
            <person name="Vojtek A.M."/>
            <person name="Epaud R."/>
            <person name="Coste A."/>
            <person name="Clement A."/>
            <person name="Housset B."/>
            <person name="Louis B."/>
            <person name="Escudier E."/>
            <person name="Amselem S."/>
        </authorList>
    </citation>
    <scope>TISSUE SPECIFICITY</scope>
    <scope>SUBCELLULAR LOCATION</scope>
</reference>
<reference key="7">
    <citation type="journal article" date="2014" name="Eur. Respir. J.">
        <title>Ciliary beat pattern and frequency in genetic variants of primary ciliary dyskinesia.</title>
        <authorList>
            <person name="Raidt J."/>
            <person name="Wallmeier J."/>
            <person name="Hjeij R."/>
            <person name="Onnebrink J.G."/>
            <person name="Pennekamp P."/>
            <person name="Loges N.T."/>
            <person name="Olbrich H."/>
            <person name="Haeffner K."/>
            <person name="Dougherty G.W."/>
            <person name="Omran H."/>
            <person name="Werner C."/>
        </authorList>
    </citation>
    <scope>INVOLVEMENT IN CILD11</scope>
</reference>